<evidence type="ECO:0000255" key="1">
    <source>
        <dbReference type="HAMAP-Rule" id="MF_00159"/>
    </source>
</evidence>
<accession>A3D6V9</accession>
<feature type="chain" id="PRO_1000011515" description="4-hydroxy-3-methylbut-2-en-1-yl diphosphate synthase (flavodoxin)">
    <location>
        <begin position="1"/>
        <end position="371"/>
    </location>
</feature>
<feature type="binding site" evidence="1">
    <location>
        <position position="270"/>
    </location>
    <ligand>
        <name>[4Fe-4S] cluster</name>
        <dbReference type="ChEBI" id="CHEBI:49883"/>
    </ligand>
</feature>
<feature type="binding site" evidence="1">
    <location>
        <position position="273"/>
    </location>
    <ligand>
        <name>[4Fe-4S] cluster</name>
        <dbReference type="ChEBI" id="CHEBI:49883"/>
    </ligand>
</feature>
<feature type="binding site" evidence="1">
    <location>
        <position position="305"/>
    </location>
    <ligand>
        <name>[4Fe-4S] cluster</name>
        <dbReference type="ChEBI" id="CHEBI:49883"/>
    </ligand>
</feature>
<feature type="binding site" evidence="1">
    <location>
        <position position="312"/>
    </location>
    <ligand>
        <name>[4Fe-4S] cluster</name>
        <dbReference type="ChEBI" id="CHEBI:49883"/>
    </ligand>
</feature>
<comment type="function">
    <text evidence="1">Converts 2C-methyl-D-erythritol 2,4-cyclodiphosphate (ME-2,4cPP) into 1-hydroxy-2-methyl-2-(E)-butenyl 4-diphosphate.</text>
</comment>
<comment type="catalytic activity">
    <reaction evidence="1">
        <text>(2E)-4-hydroxy-3-methylbut-2-enyl diphosphate + oxidized [flavodoxin] + H2O + 2 H(+) = 2-C-methyl-D-erythritol 2,4-cyclic diphosphate + reduced [flavodoxin]</text>
        <dbReference type="Rhea" id="RHEA:43604"/>
        <dbReference type="Rhea" id="RHEA-COMP:10622"/>
        <dbReference type="Rhea" id="RHEA-COMP:10623"/>
        <dbReference type="ChEBI" id="CHEBI:15377"/>
        <dbReference type="ChEBI" id="CHEBI:15378"/>
        <dbReference type="ChEBI" id="CHEBI:57618"/>
        <dbReference type="ChEBI" id="CHEBI:58210"/>
        <dbReference type="ChEBI" id="CHEBI:58483"/>
        <dbReference type="ChEBI" id="CHEBI:128753"/>
        <dbReference type="EC" id="1.17.7.3"/>
    </reaction>
</comment>
<comment type="cofactor">
    <cofactor evidence="1">
        <name>[4Fe-4S] cluster</name>
        <dbReference type="ChEBI" id="CHEBI:49883"/>
    </cofactor>
    <text evidence="1">Binds 1 [4Fe-4S] cluster.</text>
</comment>
<comment type="pathway">
    <text evidence="1">Isoprenoid biosynthesis; isopentenyl diphosphate biosynthesis via DXP pathway; isopentenyl diphosphate from 1-deoxy-D-xylulose 5-phosphate: step 5/6.</text>
</comment>
<comment type="similarity">
    <text evidence="1">Belongs to the IspG family.</text>
</comment>
<name>ISPG_SHEB5</name>
<organism>
    <name type="scientific">Shewanella baltica (strain OS155 / ATCC BAA-1091)</name>
    <dbReference type="NCBI Taxonomy" id="325240"/>
    <lineage>
        <taxon>Bacteria</taxon>
        <taxon>Pseudomonadati</taxon>
        <taxon>Pseudomonadota</taxon>
        <taxon>Gammaproteobacteria</taxon>
        <taxon>Alteromonadales</taxon>
        <taxon>Shewanellaceae</taxon>
        <taxon>Shewanella</taxon>
    </lineage>
</organism>
<dbReference type="EC" id="1.17.7.3" evidence="1"/>
<dbReference type="EMBL" id="CP000563">
    <property type="protein sequence ID" value="ABN62472.1"/>
    <property type="molecule type" value="Genomic_DNA"/>
</dbReference>
<dbReference type="RefSeq" id="WP_006082482.1">
    <property type="nucleotide sequence ID" value="NC_009052.1"/>
</dbReference>
<dbReference type="SMR" id="A3D6V9"/>
<dbReference type="STRING" id="325240.Sbal_2990"/>
<dbReference type="GeneID" id="11773204"/>
<dbReference type="KEGG" id="sbl:Sbal_2990"/>
<dbReference type="HOGENOM" id="CLU_042258_0_0_6"/>
<dbReference type="OrthoDB" id="9803214at2"/>
<dbReference type="UniPathway" id="UPA00056">
    <property type="reaction ID" value="UER00096"/>
</dbReference>
<dbReference type="Proteomes" id="UP000001557">
    <property type="component" value="Chromosome"/>
</dbReference>
<dbReference type="GO" id="GO:0051539">
    <property type="term" value="F:4 iron, 4 sulfur cluster binding"/>
    <property type="evidence" value="ECO:0007669"/>
    <property type="project" value="UniProtKB-UniRule"/>
</dbReference>
<dbReference type="GO" id="GO:0046429">
    <property type="term" value="F:4-hydroxy-3-methylbut-2-en-1-yl diphosphate synthase activity (ferredoxin)"/>
    <property type="evidence" value="ECO:0007669"/>
    <property type="project" value="UniProtKB-UniRule"/>
</dbReference>
<dbReference type="GO" id="GO:0141197">
    <property type="term" value="F:4-hydroxy-3-methylbut-2-enyl-diphosphate synthase activity (flavodoxin)"/>
    <property type="evidence" value="ECO:0007669"/>
    <property type="project" value="UniProtKB-EC"/>
</dbReference>
<dbReference type="GO" id="GO:0005506">
    <property type="term" value="F:iron ion binding"/>
    <property type="evidence" value="ECO:0007669"/>
    <property type="project" value="InterPro"/>
</dbReference>
<dbReference type="GO" id="GO:0019288">
    <property type="term" value="P:isopentenyl diphosphate biosynthetic process, methylerythritol 4-phosphate pathway"/>
    <property type="evidence" value="ECO:0007669"/>
    <property type="project" value="UniProtKB-UniRule"/>
</dbReference>
<dbReference type="GO" id="GO:0016114">
    <property type="term" value="P:terpenoid biosynthetic process"/>
    <property type="evidence" value="ECO:0007669"/>
    <property type="project" value="InterPro"/>
</dbReference>
<dbReference type="FunFam" id="3.20.20.20:FF:000001">
    <property type="entry name" value="4-hydroxy-3-methylbut-2-en-1-yl diphosphate synthase (flavodoxin)"/>
    <property type="match status" value="1"/>
</dbReference>
<dbReference type="FunFam" id="3.30.413.10:FF:000002">
    <property type="entry name" value="4-hydroxy-3-methylbut-2-en-1-yl diphosphate synthase (flavodoxin)"/>
    <property type="match status" value="1"/>
</dbReference>
<dbReference type="Gene3D" id="3.20.20.20">
    <property type="entry name" value="Dihydropteroate synthase-like"/>
    <property type="match status" value="1"/>
</dbReference>
<dbReference type="Gene3D" id="3.30.413.10">
    <property type="entry name" value="Sulfite Reductase Hemoprotein, domain 1"/>
    <property type="match status" value="1"/>
</dbReference>
<dbReference type="HAMAP" id="MF_00159">
    <property type="entry name" value="IspG"/>
    <property type="match status" value="1"/>
</dbReference>
<dbReference type="InterPro" id="IPR011005">
    <property type="entry name" value="Dihydropteroate_synth-like_sf"/>
</dbReference>
<dbReference type="InterPro" id="IPR016425">
    <property type="entry name" value="IspG_bac"/>
</dbReference>
<dbReference type="InterPro" id="IPR004588">
    <property type="entry name" value="IspG_bac-typ"/>
</dbReference>
<dbReference type="InterPro" id="IPR045854">
    <property type="entry name" value="NO2/SO3_Rdtase_4Fe4S_sf"/>
</dbReference>
<dbReference type="NCBIfam" id="TIGR00612">
    <property type="entry name" value="ispG_gcpE"/>
    <property type="match status" value="1"/>
</dbReference>
<dbReference type="NCBIfam" id="NF001540">
    <property type="entry name" value="PRK00366.1"/>
    <property type="match status" value="1"/>
</dbReference>
<dbReference type="PANTHER" id="PTHR30454">
    <property type="entry name" value="4-HYDROXY-3-METHYLBUT-2-EN-1-YL DIPHOSPHATE SYNTHASE"/>
    <property type="match status" value="1"/>
</dbReference>
<dbReference type="PANTHER" id="PTHR30454:SF0">
    <property type="entry name" value="4-HYDROXY-3-METHYLBUT-2-EN-1-YL DIPHOSPHATE SYNTHASE (FERREDOXIN), CHLOROPLASTIC"/>
    <property type="match status" value="1"/>
</dbReference>
<dbReference type="Pfam" id="PF04551">
    <property type="entry name" value="GcpE"/>
    <property type="match status" value="1"/>
</dbReference>
<dbReference type="PIRSF" id="PIRSF004640">
    <property type="entry name" value="IspG"/>
    <property type="match status" value="1"/>
</dbReference>
<dbReference type="SUPFAM" id="SSF51717">
    <property type="entry name" value="Dihydropteroate synthetase-like"/>
    <property type="match status" value="1"/>
</dbReference>
<dbReference type="SUPFAM" id="SSF56014">
    <property type="entry name" value="Nitrite and sulphite reductase 4Fe-4S domain-like"/>
    <property type="match status" value="1"/>
</dbReference>
<gene>
    <name evidence="1" type="primary">ispG</name>
    <name type="ordered locus">Sbal_2990</name>
</gene>
<reference key="1">
    <citation type="submission" date="2007-02" db="EMBL/GenBank/DDBJ databases">
        <title>Complete sequence of chromosome of Shewanella baltica OS155.</title>
        <authorList>
            <consortium name="US DOE Joint Genome Institute"/>
            <person name="Copeland A."/>
            <person name="Lucas S."/>
            <person name="Lapidus A."/>
            <person name="Barry K."/>
            <person name="Detter J.C."/>
            <person name="Glavina del Rio T."/>
            <person name="Hammon N."/>
            <person name="Israni S."/>
            <person name="Dalin E."/>
            <person name="Tice H."/>
            <person name="Pitluck S."/>
            <person name="Sims D.R."/>
            <person name="Brettin T."/>
            <person name="Bruce D."/>
            <person name="Han C."/>
            <person name="Tapia R."/>
            <person name="Brainard J."/>
            <person name="Schmutz J."/>
            <person name="Larimer F."/>
            <person name="Land M."/>
            <person name="Hauser L."/>
            <person name="Kyrpides N."/>
            <person name="Mikhailova N."/>
            <person name="Brettar I."/>
            <person name="Klappenbach J."/>
            <person name="Konstantinidis K."/>
            <person name="Rodrigues J."/>
            <person name="Tiedje J."/>
            <person name="Richardson P."/>
        </authorList>
    </citation>
    <scope>NUCLEOTIDE SEQUENCE [LARGE SCALE GENOMIC DNA]</scope>
    <source>
        <strain>OS155 / ATCC BAA-1091</strain>
    </source>
</reference>
<sequence>MYNETPIKRRPSTRIYVGNVPIGDGAPIAVQSMTNTKTTDVEATIAQIRALEKVGADIVRVSVPTMDAAEAFKLIKQAVNVPLVADIHFDYRIALKVAEYGVDCLRINPGNIGNEERIRSVVECARDHNIPIRIGVNGGSLEKDLMDKYKEPTPQALLESAMRHVDILDRLNFDQFKVSVKASDVFLAVESYRLLAKQIRQPLHLGITEAGGARAGSVKSAVGLGMLLAEGIGDTLRISLAADPVEEIKVGFDILKSLRIRSRGINFIACPSCSRQEFDVISTVNELERRLEDVTTAMDVSIIGCVVNGPGEALVSHIGLTGGHNKSGYYDEGERQKERFDNDNIVDSLEAKIRAKASQMANRIQIKDTTE</sequence>
<protein>
    <recommendedName>
        <fullName evidence="1">4-hydroxy-3-methylbut-2-en-1-yl diphosphate synthase (flavodoxin)</fullName>
        <ecNumber evidence="1">1.17.7.3</ecNumber>
    </recommendedName>
    <alternativeName>
        <fullName evidence="1">1-hydroxy-2-methyl-2-(E)-butenyl 4-diphosphate synthase</fullName>
    </alternativeName>
</protein>
<proteinExistence type="inferred from homology"/>
<keyword id="KW-0004">4Fe-4S</keyword>
<keyword id="KW-0408">Iron</keyword>
<keyword id="KW-0411">Iron-sulfur</keyword>
<keyword id="KW-0414">Isoprene biosynthesis</keyword>
<keyword id="KW-0479">Metal-binding</keyword>
<keyword id="KW-0560">Oxidoreductase</keyword>
<keyword id="KW-1185">Reference proteome</keyword>